<name>TM186_RAT</name>
<accession>Q4KLZ1</accession>
<reference key="1">
    <citation type="journal article" date="2004" name="Genome Res.">
        <title>The status, quality, and expansion of the NIH full-length cDNA project: the Mammalian Gene Collection (MGC).</title>
        <authorList>
            <consortium name="The MGC Project Team"/>
        </authorList>
    </citation>
    <scope>NUCLEOTIDE SEQUENCE [LARGE SCALE MRNA]</scope>
    <source>
        <tissue>Thymus</tissue>
    </source>
</reference>
<proteinExistence type="evidence at transcript level"/>
<comment type="function">
    <text evidence="1">As part of the MCIA complex, required for efficient assembly of the mitochondrial complex I.</text>
</comment>
<comment type="subunit">
    <text evidence="1">Part of the mitochondrial complex I assembly/MCIA complex that comprises at least the core subunits TMEM126B, NDUFAF1, ECSIT and ACAD9 and complement subunits such as COA1 and TMEM186. Interacts with MT-ND3.</text>
</comment>
<comment type="subcellular location">
    <subcellularLocation>
        <location evidence="1">Mitochondrion inner membrane</location>
        <topology evidence="1">Multi-pass membrane protein</topology>
    </subcellularLocation>
</comment>
<comment type="similarity">
    <text evidence="3">Belongs to the TMEM186 family.</text>
</comment>
<feature type="chain" id="PRO_0000279441" description="Transmembrane protein 186">
    <location>
        <begin position="1"/>
        <end position="216"/>
    </location>
</feature>
<feature type="topological domain" description="Mitochondrial matrix" evidence="3">
    <location>
        <begin position="1"/>
        <end position="68"/>
    </location>
</feature>
<feature type="transmembrane region" description="Helical" evidence="2">
    <location>
        <begin position="69"/>
        <end position="91"/>
    </location>
</feature>
<feature type="topological domain" description="Mitochondrial intermembrane" evidence="3">
    <location>
        <begin position="92"/>
        <end position="103"/>
    </location>
</feature>
<feature type="transmembrane region" description="Helical" evidence="2">
    <location>
        <begin position="104"/>
        <end position="124"/>
    </location>
</feature>
<feature type="topological domain" description="Mitochondrial matrix" evidence="3">
    <location>
        <begin position="125"/>
        <end position="216"/>
    </location>
</feature>
<dbReference type="EMBL" id="BC098933">
    <property type="protein sequence ID" value="AAH98933.1"/>
    <property type="molecule type" value="mRNA"/>
</dbReference>
<dbReference type="RefSeq" id="NP_001020927.1">
    <property type="nucleotide sequence ID" value="NM_001025756.1"/>
</dbReference>
<dbReference type="FunCoup" id="Q4KLZ1">
    <property type="interactions" value="3653"/>
</dbReference>
<dbReference type="STRING" id="10116.ENSRNOP00000062154"/>
<dbReference type="iPTMnet" id="Q4KLZ1"/>
<dbReference type="PhosphoSitePlus" id="Q4KLZ1"/>
<dbReference type="PaxDb" id="10116-ENSRNOP00000062154"/>
<dbReference type="Ensembl" id="ENSRNOT00000030290.3">
    <property type="protein sequence ID" value="ENSRNOP00000062154.1"/>
    <property type="gene ID" value="ENSRNOG00000027087.3"/>
</dbReference>
<dbReference type="GeneID" id="497863"/>
<dbReference type="KEGG" id="rno:497863"/>
<dbReference type="UCSC" id="RGD:1561167">
    <property type="organism name" value="rat"/>
</dbReference>
<dbReference type="AGR" id="RGD:1561167"/>
<dbReference type="CTD" id="25880"/>
<dbReference type="RGD" id="1561167">
    <property type="gene designation" value="Tmem186"/>
</dbReference>
<dbReference type="eggNOG" id="ENOG502S11D">
    <property type="taxonomic scope" value="Eukaryota"/>
</dbReference>
<dbReference type="GeneTree" id="ENSGT00390000000087"/>
<dbReference type="HOGENOM" id="CLU_104872_1_0_1"/>
<dbReference type="InParanoid" id="Q4KLZ1"/>
<dbReference type="OMA" id="MTIGDTG"/>
<dbReference type="OrthoDB" id="6147888at2759"/>
<dbReference type="PhylomeDB" id="Q4KLZ1"/>
<dbReference type="TreeFam" id="TF326623"/>
<dbReference type="Reactome" id="R-RNO-611105">
    <property type="pathway name" value="Respiratory electron transport"/>
</dbReference>
<dbReference type="Reactome" id="R-RNO-6799198">
    <property type="pathway name" value="Complex I biogenesis"/>
</dbReference>
<dbReference type="PRO" id="PR:Q4KLZ1"/>
<dbReference type="Proteomes" id="UP000002494">
    <property type="component" value="Chromosome 10"/>
</dbReference>
<dbReference type="Bgee" id="ENSRNOG00000027087">
    <property type="expression patterns" value="Expressed in skeletal muscle tissue and 19 other cell types or tissues"/>
</dbReference>
<dbReference type="GO" id="GO:0005743">
    <property type="term" value="C:mitochondrial inner membrane"/>
    <property type="evidence" value="ECO:0007669"/>
    <property type="project" value="UniProtKB-SubCell"/>
</dbReference>
<dbReference type="GO" id="GO:0005739">
    <property type="term" value="C:mitochondrion"/>
    <property type="evidence" value="ECO:0000250"/>
    <property type="project" value="UniProtKB"/>
</dbReference>
<dbReference type="GO" id="GO:0032981">
    <property type="term" value="P:mitochondrial respiratory chain complex I assembly"/>
    <property type="evidence" value="ECO:0000250"/>
    <property type="project" value="UniProtKB"/>
</dbReference>
<dbReference type="InterPro" id="IPR026571">
    <property type="entry name" value="Tmem186"/>
</dbReference>
<dbReference type="PANTHER" id="PTHR13603">
    <property type="entry name" value="TRANSMEMBRANE PROTEIN 186"/>
    <property type="match status" value="1"/>
</dbReference>
<dbReference type="PANTHER" id="PTHR13603:SF1">
    <property type="entry name" value="TRANSMEMBRANE PROTEIN 186"/>
    <property type="match status" value="1"/>
</dbReference>
<keyword id="KW-0472">Membrane</keyword>
<keyword id="KW-0496">Mitochondrion</keyword>
<keyword id="KW-0999">Mitochondrion inner membrane</keyword>
<keyword id="KW-1185">Reference proteome</keyword>
<keyword id="KW-0812">Transmembrane</keyword>
<keyword id="KW-1133">Transmembrane helix</keyword>
<organism>
    <name type="scientific">Rattus norvegicus</name>
    <name type="common">Rat</name>
    <dbReference type="NCBI Taxonomy" id="10116"/>
    <lineage>
        <taxon>Eukaryota</taxon>
        <taxon>Metazoa</taxon>
        <taxon>Chordata</taxon>
        <taxon>Craniata</taxon>
        <taxon>Vertebrata</taxon>
        <taxon>Euteleostomi</taxon>
        <taxon>Mammalia</taxon>
        <taxon>Eutheria</taxon>
        <taxon>Euarchontoglires</taxon>
        <taxon>Glires</taxon>
        <taxon>Rodentia</taxon>
        <taxon>Myomorpha</taxon>
        <taxon>Muroidea</taxon>
        <taxon>Muridae</taxon>
        <taxon>Murinae</taxon>
        <taxon>Rattus</taxon>
    </lineage>
</organism>
<protein>
    <recommendedName>
        <fullName evidence="3">Transmembrane protein 186</fullName>
    </recommendedName>
</protein>
<sequence length="216" mass="24641">MAFLLRAVPRLQGPAAWRRPLQQLWCRAGQGDSIRWVGSRSPPSQEKPPGTETEKFHTIYRFNAIRALGFLSRLKLAQTAVTVVALPPGFYCYSQGLMTLSSLGLMSGIASFALVMLCWMSHFFRRLVGILYVNESGTLLRVAHLTFWGWRQDTYCAVSDMIPLSESEERVQDVFVRIQQYSGKQTFYLTLRYGRILDRDRFSQVFGTLATLKNSK</sequence>
<gene>
    <name evidence="4" type="primary">Tmem186</name>
</gene>
<evidence type="ECO:0000250" key="1">
    <source>
        <dbReference type="UniProtKB" id="Q96B77"/>
    </source>
</evidence>
<evidence type="ECO:0000255" key="2"/>
<evidence type="ECO:0000305" key="3"/>
<evidence type="ECO:0000312" key="4">
    <source>
        <dbReference type="RGD" id="1561167"/>
    </source>
</evidence>